<name>MDTK_ECO45</name>
<protein>
    <recommendedName>
        <fullName evidence="1">Multidrug resistance protein MdtK</fullName>
    </recommendedName>
    <alternativeName>
        <fullName evidence="1">Multidrug-efflux transporter</fullName>
    </alternativeName>
</protein>
<evidence type="ECO:0000255" key="1">
    <source>
        <dbReference type="HAMAP-Rule" id="MF_00400"/>
    </source>
</evidence>
<reference key="1">
    <citation type="journal article" date="2009" name="PLoS Genet.">
        <title>Organised genome dynamics in the Escherichia coli species results in highly diverse adaptive paths.</title>
        <authorList>
            <person name="Touchon M."/>
            <person name="Hoede C."/>
            <person name="Tenaillon O."/>
            <person name="Barbe V."/>
            <person name="Baeriswyl S."/>
            <person name="Bidet P."/>
            <person name="Bingen E."/>
            <person name="Bonacorsi S."/>
            <person name="Bouchier C."/>
            <person name="Bouvet O."/>
            <person name="Calteau A."/>
            <person name="Chiapello H."/>
            <person name="Clermont O."/>
            <person name="Cruveiller S."/>
            <person name="Danchin A."/>
            <person name="Diard M."/>
            <person name="Dossat C."/>
            <person name="Karoui M.E."/>
            <person name="Frapy E."/>
            <person name="Garry L."/>
            <person name="Ghigo J.M."/>
            <person name="Gilles A.M."/>
            <person name="Johnson J."/>
            <person name="Le Bouguenec C."/>
            <person name="Lescat M."/>
            <person name="Mangenot S."/>
            <person name="Martinez-Jehanne V."/>
            <person name="Matic I."/>
            <person name="Nassif X."/>
            <person name="Oztas S."/>
            <person name="Petit M.A."/>
            <person name="Pichon C."/>
            <person name="Rouy Z."/>
            <person name="Ruf C.S."/>
            <person name="Schneider D."/>
            <person name="Tourret J."/>
            <person name="Vacherie B."/>
            <person name="Vallenet D."/>
            <person name="Medigue C."/>
            <person name="Rocha E.P.C."/>
            <person name="Denamur E."/>
        </authorList>
    </citation>
    <scope>NUCLEOTIDE SEQUENCE [LARGE SCALE GENOMIC DNA]</scope>
    <source>
        <strain>S88 / ExPEC</strain>
    </source>
</reference>
<feature type="chain" id="PRO_1000191094" description="Multidrug resistance protein MdtK">
    <location>
        <begin position="1"/>
        <end position="457"/>
    </location>
</feature>
<feature type="transmembrane region" description="Helical" evidence="1">
    <location>
        <begin position="11"/>
        <end position="31"/>
    </location>
</feature>
<feature type="transmembrane region" description="Helical" evidence="1">
    <location>
        <begin position="53"/>
        <end position="73"/>
    </location>
</feature>
<feature type="transmembrane region" description="Helical" evidence="1">
    <location>
        <begin position="93"/>
        <end position="113"/>
    </location>
</feature>
<feature type="transmembrane region" description="Helical" evidence="1">
    <location>
        <begin position="127"/>
        <end position="147"/>
    </location>
</feature>
<feature type="transmembrane region" description="Helical" evidence="1">
    <location>
        <begin position="160"/>
        <end position="180"/>
    </location>
</feature>
<feature type="transmembrane region" description="Helical" evidence="1">
    <location>
        <begin position="189"/>
        <end position="209"/>
    </location>
</feature>
<feature type="transmembrane region" description="Helical" evidence="1">
    <location>
        <begin position="243"/>
        <end position="263"/>
    </location>
</feature>
<feature type="transmembrane region" description="Helical" evidence="1">
    <location>
        <begin position="276"/>
        <end position="296"/>
    </location>
</feature>
<feature type="transmembrane region" description="Helical" evidence="1">
    <location>
        <begin position="314"/>
        <end position="334"/>
    </location>
</feature>
<feature type="transmembrane region" description="Helical" evidence="1">
    <location>
        <begin position="350"/>
        <end position="370"/>
    </location>
</feature>
<feature type="transmembrane region" description="Helical" evidence="1">
    <location>
        <begin position="387"/>
        <end position="407"/>
    </location>
</feature>
<feature type="transmembrane region" description="Helical" evidence="1">
    <location>
        <begin position="418"/>
        <end position="438"/>
    </location>
</feature>
<proteinExistence type="inferred from homology"/>
<sequence length="457" mass="49430">MQKYISEARLLLALAIPVILAQIAQTAMGFVDTVMAGGYSATDMAAVAIGTSIWLPAILFGHGLLLALTPVIAQLNGSGRRERIAHQVRQGFWLAGFVSVLIMLVLWNAGYIIRSMQNIDPALADKAVGYLRALLWGAPGYLFFQVARNQCEGLAKTKPGMVMGFIGLLVNIPVNYIFIYGHFGMPELGGVGCGVATAAVYWVMFLAMVSYIKRARSMRDIRNEKGTAKPDPAVMKRLIQLGLPIALALFFEVTLFAVVALLVSPLGIVDVAGHQIALNFSSLMFVLPMSLAAAVTIRVGYRLGQGSTLDAQTAARTGLMVGVCMATLTAIFTVSLREQIALLYNDNPEVVTLAAHLMLLAAVYQISDSIQVIGSGILRGYKDTRSIFYITFTAYWVLGLPSGYILALTDLVVEPMGPAGFWIGFIIGLTSAAIMMMLRMRFLQRLPSAIILQRAAR</sequence>
<keyword id="KW-0050">Antiport</keyword>
<keyword id="KW-0997">Cell inner membrane</keyword>
<keyword id="KW-1003">Cell membrane</keyword>
<keyword id="KW-0406">Ion transport</keyword>
<keyword id="KW-0472">Membrane</keyword>
<keyword id="KW-1185">Reference proteome</keyword>
<keyword id="KW-0915">Sodium</keyword>
<keyword id="KW-0739">Sodium transport</keyword>
<keyword id="KW-0812">Transmembrane</keyword>
<keyword id="KW-1133">Transmembrane helix</keyword>
<keyword id="KW-0813">Transport</keyword>
<accession>B7MA17</accession>
<comment type="function">
    <text evidence="1">Multidrug efflux pump that functions probably as a Na(+)/drug antiporter.</text>
</comment>
<comment type="subcellular location">
    <subcellularLocation>
        <location evidence="1">Cell inner membrane</location>
        <topology evidence="1">Multi-pass membrane protein</topology>
    </subcellularLocation>
</comment>
<comment type="similarity">
    <text evidence="1">Belongs to the multi antimicrobial extrusion (MATE) (TC 2.A.66.1) family. MdtK subfamily.</text>
</comment>
<dbReference type="EMBL" id="CU928161">
    <property type="protein sequence ID" value="CAR03024.1"/>
    <property type="molecule type" value="Genomic_DNA"/>
</dbReference>
<dbReference type="RefSeq" id="WP_001174963.1">
    <property type="nucleotide sequence ID" value="NC_011742.1"/>
</dbReference>
<dbReference type="SMR" id="B7MA17"/>
<dbReference type="KEGG" id="ecz:ECS88_1712"/>
<dbReference type="HOGENOM" id="CLU_012893_6_0_6"/>
<dbReference type="Proteomes" id="UP000000747">
    <property type="component" value="Chromosome"/>
</dbReference>
<dbReference type="GO" id="GO:0005886">
    <property type="term" value="C:plasma membrane"/>
    <property type="evidence" value="ECO:0007669"/>
    <property type="project" value="UniProtKB-SubCell"/>
</dbReference>
<dbReference type="GO" id="GO:0015297">
    <property type="term" value="F:antiporter activity"/>
    <property type="evidence" value="ECO:0007669"/>
    <property type="project" value="UniProtKB-UniRule"/>
</dbReference>
<dbReference type="GO" id="GO:0042910">
    <property type="term" value="F:xenobiotic transmembrane transporter activity"/>
    <property type="evidence" value="ECO:0007669"/>
    <property type="project" value="UniProtKB-UniRule"/>
</dbReference>
<dbReference type="GO" id="GO:0006814">
    <property type="term" value="P:sodium ion transport"/>
    <property type="evidence" value="ECO:0007669"/>
    <property type="project" value="UniProtKB-UniRule"/>
</dbReference>
<dbReference type="GO" id="GO:0006855">
    <property type="term" value="P:xenobiotic transmembrane transport"/>
    <property type="evidence" value="ECO:0007669"/>
    <property type="project" value="UniProtKB-UniRule"/>
</dbReference>
<dbReference type="CDD" id="cd13131">
    <property type="entry name" value="MATE_NorM_like"/>
    <property type="match status" value="1"/>
</dbReference>
<dbReference type="HAMAP" id="MF_00400">
    <property type="entry name" value="MdtK"/>
    <property type="match status" value="1"/>
</dbReference>
<dbReference type="InterPro" id="IPR002528">
    <property type="entry name" value="MATE_fam"/>
</dbReference>
<dbReference type="InterPro" id="IPR050222">
    <property type="entry name" value="MATE_MdtK"/>
</dbReference>
<dbReference type="InterPro" id="IPR048279">
    <property type="entry name" value="MdtK-like"/>
</dbReference>
<dbReference type="InterPro" id="IPR022913">
    <property type="entry name" value="Multidrug-R_MdtK"/>
</dbReference>
<dbReference type="NCBIfam" id="TIGR00797">
    <property type="entry name" value="matE"/>
    <property type="match status" value="1"/>
</dbReference>
<dbReference type="PANTHER" id="PTHR43298:SF2">
    <property type="entry name" value="FMN_FAD EXPORTER YEEO-RELATED"/>
    <property type="match status" value="1"/>
</dbReference>
<dbReference type="PANTHER" id="PTHR43298">
    <property type="entry name" value="MULTIDRUG RESISTANCE PROTEIN NORM-RELATED"/>
    <property type="match status" value="1"/>
</dbReference>
<dbReference type="Pfam" id="PF01554">
    <property type="entry name" value="MatE"/>
    <property type="match status" value="2"/>
</dbReference>
<dbReference type="PIRSF" id="PIRSF006603">
    <property type="entry name" value="DinF"/>
    <property type="match status" value="1"/>
</dbReference>
<gene>
    <name evidence="1" type="primary">mdtK</name>
    <name type="ordered locus">ECS88_1712</name>
</gene>
<organism>
    <name type="scientific">Escherichia coli O45:K1 (strain S88 / ExPEC)</name>
    <dbReference type="NCBI Taxonomy" id="585035"/>
    <lineage>
        <taxon>Bacteria</taxon>
        <taxon>Pseudomonadati</taxon>
        <taxon>Pseudomonadota</taxon>
        <taxon>Gammaproteobacteria</taxon>
        <taxon>Enterobacterales</taxon>
        <taxon>Enterobacteriaceae</taxon>
        <taxon>Escherichia</taxon>
    </lineage>
</organism>